<reference key="1">
    <citation type="journal article" date="1996" name="Plant Mol. Biol.">
        <title>Identification of a light-regulated MYB gene from an Arabidopsis transcription factor gene collection.</title>
        <authorList>
            <person name="Quaedvlieg N."/>
            <person name="Dockx J."/>
            <person name="Keultjes G."/>
            <person name="Kock P."/>
            <person name="Wilmering J."/>
            <person name="Weisbeek P."/>
            <person name="Smeekens S."/>
        </authorList>
    </citation>
    <scope>NUCLEOTIDE SEQUENCE [GENOMIC DNA / MRNA]</scope>
    <scope>TISSUE SPECIFICITY</scope>
    <scope>INDUCTION BY LIGHT</scope>
    <source>
        <strain>cv. Columbia</strain>
    </source>
</reference>
<reference key="2">
    <citation type="submission" date="2004-01" db="EMBL/GenBank/DDBJ databases">
        <title>The MYB transcription factor family in Arabidopsis: a genome-wide cloning and expression pattern analysis.</title>
        <authorList>
            <person name="Qu L."/>
            <person name="Gu H."/>
        </authorList>
    </citation>
    <scope>NUCLEOTIDE SEQUENCE [MRNA]</scope>
</reference>
<reference key="3">
    <citation type="journal article" date="1999" name="Nature">
        <title>Sequence and analysis of chromosome 4 of the plant Arabidopsis thaliana.</title>
        <authorList>
            <person name="Mayer K.F.X."/>
            <person name="Schueller C."/>
            <person name="Wambutt R."/>
            <person name="Murphy G."/>
            <person name="Volckaert G."/>
            <person name="Pohl T."/>
            <person name="Duesterhoeft A."/>
            <person name="Stiekema W."/>
            <person name="Entian K.-D."/>
            <person name="Terryn N."/>
            <person name="Harris B."/>
            <person name="Ansorge W."/>
            <person name="Brandt P."/>
            <person name="Grivell L.A."/>
            <person name="Rieger M."/>
            <person name="Weichselgartner M."/>
            <person name="de Simone V."/>
            <person name="Obermaier B."/>
            <person name="Mache R."/>
            <person name="Mueller M."/>
            <person name="Kreis M."/>
            <person name="Delseny M."/>
            <person name="Puigdomenech P."/>
            <person name="Watson M."/>
            <person name="Schmidtheini T."/>
            <person name="Reichert B."/>
            <person name="Portetelle D."/>
            <person name="Perez-Alonso M."/>
            <person name="Boutry M."/>
            <person name="Bancroft I."/>
            <person name="Vos P."/>
            <person name="Hoheisel J."/>
            <person name="Zimmermann W."/>
            <person name="Wedler H."/>
            <person name="Ridley P."/>
            <person name="Langham S.-A."/>
            <person name="McCullagh B."/>
            <person name="Bilham L."/>
            <person name="Robben J."/>
            <person name="van der Schueren J."/>
            <person name="Grymonprez B."/>
            <person name="Chuang Y.-J."/>
            <person name="Vandenbussche F."/>
            <person name="Braeken M."/>
            <person name="Weltjens I."/>
            <person name="Voet M."/>
            <person name="Bastiaens I."/>
            <person name="Aert R."/>
            <person name="Defoor E."/>
            <person name="Weitzenegger T."/>
            <person name="Bothe G."/>
            <person name="Ramsperger U."/>
            <person name="Hilbert H."/>
            <person name="Braun M."/>
            <person name="Holzer E."/>
            <person name="Brandt A."/>
            <person name="Peters S."/>
            <person name="van Staveren M."/>
            <person name="Dirkse W."/>
            <person name="Mooijman P."/>
            <person name="Klein Lankhorst R."/>
            <person name="Rose M."/>
            <person name="Hauf J."/>
            <person name="Koetter P."/>
            <person name="Berneiser S."/>
            <person name="Hempel S."/>
            <person name="Feldpausch M."/>
            <person name="Lamberth S."/>
            <person name="Van den Daele H."/>
            <person name="De Keyser A."/>
            <person name="Buysshaert C."/>
            <person name="Gielen J."/>
            <person name="Villarroel R."/>
            <person name="De Clercq R."/>
            <person name="van Montagu M."/>
            <person name="Rogers J."/>
            <person name="Cronin A."/>
            <person name="Quail M.A."/>
            <person name="Bray-Allen S."/>
            <person name="Clark L."/>
            <person name="Doggett J."/>
            <person name="Hall S."/>
            <person name="Kay M."/>
            <person name="Lennard N."/>
            <person name="McLay K."/>
            <person name="Mayes R."/>
            <person name="Pettett A."/>
            <person name="Rajandream M.A."/>
            <person name="Lyne M."/>
            <person name="Benes V."/>
            <person name="Rechmann S."/>
            <person name="Borkova D."/>
            <person name="Bloecker H."/>
            <person name="Scharfe M."/>
            <person name="Grimm M."/>
            <person name="Loehnert T.-H."/>
            <person name="Dose S."/>
            <person name="de Haan M."/>
            <person name="Maarse A.C."/>
            <person name="Schaefer M."/>
            <person name="Mueller-Auer S."/>
            <person name="Gabel C."/>
            <person name="Fuchs M."/>
            <person name="Fartmann B."/>
            <person name="Granderath K."/>
            <person name="Dauner D."/>
            <person name="Herzl A."/>
            <person name="Neumann S."/>
            <person name="Argiriou A."/>
            <person name="Vitale D."/>
            <person name="Liguori R."/>
            <person name="Piravandi E."/>
            <person name="Massenet O."/>
            <person name="Quigley F."/>
            <person name="Clabauld G."/>
            <person name="Muendlein A."/>
            <person name="Felber R."/>
            <person name="Schnabl S."/>
            <person name="Hiller R."/>
            <person name="Schmidt W."/>
            <person name="Lecharny A."/>
            <person name="Aubourg S."/>
            <person name="Chefdor F."/>
            <person name="Cooke R."/>
            <person name="Berger C."/>
            <person name="Monfort A."/>
            <person name="Casacuberta E."/>
            <person name="Gibbons T."/>
            <person name="Weber N."/>
            <person name="Vandenbol M."/>
            <person name="Bargues M."/>
            <person name="Terol J."/>
            <person name="Torres A."/>
            <person name="Perez-Perez A."/>
            <person name="Purnelle B."/>
            <person name="Bent E."/>
            <person name="Johnson S."/>
            <person name="Tacon D."/>
            <person name="Jesse T."/>
            <person name="Heijnen L."/>
            <person name="Schwarz S."/>
            <person name="Scholler P."/>
            <person name="Heber S."/>
            <person name="Francs P."/>
            <person name="Bielke C."/>
            <person name="Frishman D."/>
            <person name="Haase D."/>
            <person name="Lemcke K."/>
            <person name="Mewes H.-W."/>
            <person name="Stocker S."/>
            <person name="Zaccaria P."/>
            <person name="Bevan M."/>
            <person name="Wilson R.K."/>
            <person name="de la Bastide M."/>
            <person name="Habermann K."/>
            <person name="Parnell L."/>
            <person name="Dedhia N."/>
            <person name="Gnoj L."/>
            <person name="Schutz K."/>
            <person name="Huang E."/>
            <person name="Spiegel L."/>
            <person name="Sekhon M."/>
            <person name="Murray J."/>
            <person name="Sheet P."/>
            <person name="Cordes M."/>
            <person name="Abu-Threideh J."/>
            <person name="Stoneking T."/>
            <person name="Kalicki J."/>
            <person name="Graves T."/>
            <person name="Harmon G."/>
            <person name="Edwards J."/>
            <person name="Latreille P."/>
            <person name="Courtney L."/>
            <person name="Cloud J."/>
            <person name="Abbott A."/>
            <person name="Scott K."/>
            <person name="Johnson D."/>
            <person name="Minx P."/>
            <person name="Bentley D."/>
            <person name="Fulton B."/>
            <person name="Miller N."/>
            <person name="Greco T."/>
            <person name="Kemp K."/>
            <person name="Kramer J."/>
            <person name="Fulton L."/>
            <person name="Mardis E."/>
            <person name="Dante M."/>
            <person name="Pepin K."/>
            <person name="Hillier L.W."/>
            <person name="Nelson J."/>
            <person name="Spieth J."/>
            <person name="Ryan E."/>
            <person name="Andrews S."/>
            <person name="Geisel C."/>
            <person name="Layman D."/>
            <person name="Du H."/>
            <person name="Ali J."/>
            <person name="Berghoff A."/>
            <person name="Jones K."/>
            <person name="Drone K."/>
            <person name="Cotton M."/>
            <person name="Joshu C."/>
            <person name="Antonoiu B."/>
            <person name="Zidanic M."/>
            <person name="Strong C."/>
            <person name="Sun H."/>
            <person name="Lamar B."/>
            <person name="Yordan C."/>
            <person name="Ma P."/>
            <person name="Zhong J."/>
            <person name="Preston R."/>
            <person name="Vil D."/>
            <person name="Shekher M."/>
            <person name="Matero A."/>
            <person name="Shah R."/>
            <person name="Swaby I.K."/>
            <person name="O'Shaughnessy A."/>
            <person name="Rodriguez M."/>
            <person name="Hoffman J."/>
            <person name="Till S."/>
            <person name="Granat S."/>
            <person name="Shohdy N."/>
            <person name="Hasegawa A."/>
            <person name="Hameed A."/>
            <person name="Lodhi M."/>
            <person name="Johnson A."/>
            <person name="Chen E."/>
            <person name="Marra M.A."/>
            <person name="Martienssen R."/>
            <person name="McCombie W.R."/>
        </authorList>
    </citation>
    <scope>NUCLEOTIDE SEQUENCE [LARGE SCALE GENOMIC DNA]</scope>
    <source>
        <strain>cv. Columbia</strain>
    </source>
</reference>
<reference key="4">
    <citation type="journal article" date="2017" name="Plant J.">
        <title>Araport11: a complete reannotation of the Arabidopsis thaliana reference genome.</title>
        <authorList>
            <person name="Cheng C.Y."/>
            <person name="Krishnakumar V."/>
            <person name="Chan A.P."/>
            <person name="Thibaud-Nissen F."/>
            <person name="Schobel S."/>
            <person name="Town C.D."/>
        </authorList>
    </citation>
    <scope>GENOME REANNOTATION</scope>
    <source>
        <strain>cv. Columbia</strain>
    </source>
</reference>
<reference key="5">
    <citation type="journal article" date="2003" name="Science">
        <title>Empirical analysis of transcriptional activity in the Arabidopsis genome.</title>
        <authorList>
            <person name="Yamada K."/>
            <person name="Lim J."/>
            <person name="Dale J.M."/>
            <person name="Chen H."/>
            <person name="Shinn P."/>
            <person name="Palm C.J."/>
            <person name="Southwick A.M."/>
            <person name="Wu H.C."/>
            <person name="Kim C.J."/>
            <person name="Nguyen M."/>
            <person name="Pham P.K."/>
            <person name="Cheuk R.F."/>
            <person name="Karlin-Newmann G."/>
            <person name="Liu S.X."/>
            <person name="Lam B."/>
            <person name="Sakano H."/>
            <person name="Wu T."/>
            <person name="Yu G."/>
            <person name="Miranda M."/>
            <person name="Quach H.L."/>
            <person name="Tripp M."/>
            <person name="Chang C.H."/>
            <person name="Lee J.M."/>
            <person name="Toriumi M.J."/>
            <person name="Chan M.M."/>
            <person name="Tang C.C."/>
            <person name="Onodera C.S."/>
            <person name="Deng J.M."/>
            <person name="Akiyama K."/>
            <person name="Ansari Y."/>
            <person name="Arakawa T."/>
            <person name="Banh J."/>
            <person name="Banno F."/>
            <person name="Bowser L."/>
            <person name="Brooks S.Y."/>
            <person name="Carninci P."/>
            <person name="Chao Q."/>
            <person name="Choy N."/>
            <person name="Enju A."/>
            <person name="Goldsmith A.D."/>
            <person name="Gurjal M."/>
            <person name="Hansen N.F."/>
            <person name="Hayashizaki Y."/>
            <person name="Johnson-Hopson C."/>
            <person name="Hsuan V.W."/>
            <person name="Iida K."/>
            <person name="Karnes M."/>
            <person name="Khan S."/>
            <person name="Koesema E."/>
            <person name="Ishida J."/>
            <person name="Jiang P.X."/>
            <person name="Jones T."/>
            <person name="Kawai J."/>
            <person name="Kamiya A."/>
            <person name="Meyers C."/>
            <person name="Nakajima M."/>
            <person name="Narusaka M."/>
            <person name="Seki M."/>
            <person name="Sakurai T."/>
            <person name="Satou M."/>
            <person name="Tamse R."/>
            <person name="Vaysberg M."/>
            <person name="Wallender E.K."/>
            <person name="Wong C."/>
            <person name="Yamamura Y."/>
            <person name="Yuan S."/>
            <person name="Shinozaki K."/>
            <person name="Davis R.W."/>
            <person name="Theologis A."/>
            <person name="Ecker J.R."/>
        </authorList>
    </citation>
    <scope>NUCLEOTIDE SEQUENCE [LARGE SCALE MRNA]</scope>
    <source>
        <strain>cv. Columbia</strain>
    </source>
</reference>
<reference key="6">
    <citation type="submission" date="2002-03" db="EMBL/GenBank/DDBJ databases">
        <title>Full-length cDNA from Arabidopsis thaliana.</title>
        <authorList>
            <person name="Brover V.V."/>
            <person name="Troukhan M.E."/>
            <person name="Alexandrov N.A."/>
            <person name="Lu Y.-P."/>
            <person name="Flavell R.B."/>
            <person name="Feldmann K.A."/>
        </authorList>
    </citation>
    <scope>NUCLEOTIDE SEQUENCE [LARGE SCALE MRNA]</scope>
</reference>
<reference key="7">
    <citation type="journal article" date="2003" name="Plant Physiol.">
        <title>Integration of wounding and osmotic stress signals determines the expression of the AtMYB102 transcription factor gene.</title>
        <authorList>
            <person name="Denekamp M."/>
            <person name="Smeekens S.C."/>
        </authorList>
    </citation>
    <scope>FUNCTION</scope>
    <scope>INDUCTION</scope>
</reference>
<reference key="8">
    <citation type="journal article" date="2006" name="Plant Signal. Behav.">
        <title>The Arabidopsis thaliana transcription factor AtMYB102 functions in defense against the insect herbivore Pieris rapae.</title>
        <authorList>
            <person name="De Vos M."/>
            <person name="Denekamp M."/>
            <person name="Dicke M."/>
            <person name="Vuylsteke M."/>
            <person name="Van Loon L."/>
            <person name="Smeekens S.C."/>
            <person name="Pieterse C.M."/>
        </authorList>
    </citation>
    <scope>FUNCTION</scope>
    <scope>INDUCTION</scope>
    <scope>DISRUPTION PHENOTYPE</scope>
</reference>
<keyword id="KW-0238">DNA-binding</keyword>
<keyword id="KW-0539">Nucleus</keyword>
<keyword id="KW-0611">Plant defense</keyword>
<keyword id="KW-1185">Reference proteome</keyword>
<keyword id="KW-0677">Repeat</keyword>
<keyword id="KW-0346">Stress response</keyword>
<keyword id="KW-0804">Transcription</keyword>
<keyword id="KW-0805">Transcription regulation</keyword>
<protein>
    <recommendedName>
        <fullName evidence="7">Transcription factor MYB102</fullName>
    </recommendedName>
    <alternativeName>
        <fullName evidence="7">Myb-related protein 102</fullName>
        <shortName evidence="5">AtMYB102</shortName>
    </alternativeName>
    <alternativeName>
        <fullName evidence="7">Myb-related protein M4</fullName>
        <shortName evidence="6">AtM4</shortName>
    </alternativeName>
</protein>
<feature type="chain" id="PRO_0000439656" description="Transcription factor MYB102">
    <location>
        <begin position="1"/>
        <end position="350"/>
    </location>
</feature>
<feature type="domain" description="HTH myb-type 1" evidence="1">
    <location>
        <begin position="9"/>
        <end position="65"/>
    </location>
</feature>
<feature type="domain" description="HTH myb-type 2" evidence="1">
    <location>
        <begin position="66"/>
        <end position="116"/>
    </location>
</feature>
<feature type="DNA-binding region" description="H-T-H motif" evidence="1">
    <location>
        <begin position="37"/>
        <end position="61"/>
    </location>
</feature>
<feature type="DNA-binding region" description="H-T-H motif" evidence="1">
    <location>
        <begin position="89"/>
        <end position="112"/>
    </location>
</feature>
<feature type="sequence conflict" description="In Ref. 5; AAL32697." evidence="7" ref="5">
    <original>S</original>
    <variation>F</variation>
    <location>
        <position position="19"/>
    </location>
</feature>
<feature type="sequence conflict" description="In Ref. 6; AAM64808." evidence="7" ref="6">
    <original>N</original>
    <variation>D</variation>
    <location>
        <position position="217"/>
    </location>
</feature>
<feature type="sequence conflict" description="In Ref. 6; AAM64808." evidence="7" ref="6">
    <original>R</original>
    <variation>H</variation>
    <location>
        <position position="240"/>
    </location>
</feature>
<gene>
    <name evidence="5" type="primary">MYB102</name>
    <name evidence="9" type="ordered locus">At4g21440</name>
    <name evidence="10" type="ORF">F18E5.60</name>
    <name evidence="11" type="ORF">T6K22.170</name>
</gene>
<sequence length="350" mass="40167">MARSPCCEKNGLKKGPWTSEEDQKLVDYIQKHGYGNWRTLPKNAGLQRCGKSCRLRWTNYLRPDIKRGRFSFEEEETIIQLHSFLGNKWSAIAARLPGRTDNEIKNFWNTHIRKKLLRMGIDPVTHSPRLDLLDISSILASSLYNSSSHHMNMSRLMMDTNRRHHQQHPLVNPEILKLATSLFSQNQNQNLVVDHDSRTQEKQTVYSQTGVNQYQTNQYFENTITQELQSSMPPFPNEARQFNNMDHHFNGFGEQNLVSTSTTSVQDCYNPSFNDYSSSNFVLDPSYSDQSFNFANSVLNTPSSSPSPTTLNSSYINSSSCSTEDEIESYCSNLMKFDIPDFLDVNGFII</sequence>
<name>MY102_ARATH</name>
<organism>
    <name type="scientific">Arabidopsis thaliana</name>
    <name type="common">Mouse-ear cress</name>
    <dbReference type="NCBI Taxonomy" id="3702"/>
    <lineage>
        <taxon>Eukaryota</taxon>
        <taxon>Viridiplantae</taxon>
        <taxon>Streptophyta</taxon>
        <taxon>Embryophyta</taxon>
        <taxon>Tracheophyta</taxon>
        <taxon>Spermatophyta</taxon>
        <taxon>Magnoliopsida</taxon>
        <taxon>eudicotyledons</taxon>
        <taxon>Gunneridae</taxon>
        <taxon>Pentapetalae</taxon>
        <taxon>rosids</taxon>
        <taxon>malvids</taxon>
        <taxon>Brassicales</taxon>
        <taxon>Brassicaceae</taxon>
        <taxon>Camelineae</taxon>
        <taxon>Arabidopsis</taxon>
    </lineage>
</organism>
<comment type="function">
    <text evidence="3 8">Probable transcription factor that may function in osmotic stress and wounding signaling pathways (Probable). Contributes to basal resistance against the herbivore Pieris rapae (white cabbage butterfly) feeding (PubMed:19517001).</text>
</comment>
<comment type="subcellular location">
    <subcellularLocation>
        <location evidence="1">Nucleus</location>
    </subcellularLocation>
</comment>
<comment type="tissue specificity">
    <text evidence="4">Expressed in rosette leaves, cauline leaves and flowers.</text>
</comment>
<comment type="induction">
    <text evidence="2 3 4">Induced by light (PubMed:8980549). Induced by wounding, salt stress and abscisic acid (PubMed:12857823). Induced by the lepidopteran herbivore Pieris rapae (white cabbage butterfly) feeding (PubMed:19517001).</text>
</comment>
<comment type="disruption phenotype">
    <text evidence="3">No visible phenotype under normal growth conditions, but mutant plant show increased susceptibility to the herbivore Pieris rapae (white cabbage butterfly) feeding.</text>
</comment>
<comment type="sequence caution" evidence="7">
    <conflict type="erroneous gene model prediction">
        <sequence resource="EMBL-CDS" id="CAA18708"/>
    </conflict>
</comment>
<comment type="sequence caution" evidence="7">
    <conflict type="erroneous gene model prediction">
        <sequence resource="EMBL-CDS" id="CAA20209"/>
    </conflict>
</comment>
<comment type="sequence caution" evidence="7">
    <conflict type="erroneous gene model prediction">
        <sequence resource="EMBL-CDS" id="CAB81251"/>
    </conflict>
</comment>
<dbReference type="EMBL" id="X90381">
    <property type="protein sequence ID" value="CAB77384.1"/>
    <property type="molecule type" value="Genomic_DNA"/>
</dbReference>
<dbReference type="EMBL" id="X90382">
    <property type="protein sequence ID" value="CAB81661.1"/>
    <property type="molecule type" value="mRNA"/>
</dbReference>
<dbReference type="EMBL" id="AY519607">
    <property type="protein sequence ID" value="AAS10077.1"/>
    <property type="molecule type" value="mRNA"/>
</dbReference>
<dbReference type="EMBL" id="AL022603">
    <property type="protein sequence ID" value="CAA18708.1"/>
    <property type="status" value="ALT_SEQ"/>
    <property type="molecule type" value="Genomic_DNA"/>
</dbReference>
<dbReference type="EMBL" id="AL031187">
    <property type="protein sequence ID" value="CAA20209.1"/>
    <property type="status" value="ALT_SEQ"/>
    <property type="molecule type" value="Genomic_DNA"/>
</dbReference>
<dbReference type="EMBL" id="AL161555">
    <property type="protein sequence ID" value="CAB81251.1"/>
    <property type="status" value="ALT_SEQ"/>
    <property type="molecule type" value="Genomic_DNA"/>
</dbReference>
<dbReference type="EMBL" id="CP002687">
    <property type="protein sequence ID" value="AEE84451.1"/>
    <property type="molecule type" value="Genomic_DNA"/>
</dbReference>
<dbReference type="EMBL" id="AY062619">
    <property type="protein sequence ID" value="AAL32697.1"/>
    <property type="molecule type" value="mRNA"/>
</dbReference>
<dbReference type="EMBL" id="BT001235">
    <property type="protein sequence ID" value="AAN65122.1"/>
    <property type="molecule type" value="mRNA"/>
</dbReference>
<dbReference type="EMBL" id="AY087252">
    <property type="protein sequence ID" value="AAM64808.1"/>
    <property type="molecule type" value="mRNA"/>
</dbReference>
<dbReference type="PIR" id="T05152">
    <property type="entry name" value="S58293"/>
</dbReference>
<dbReference type="RefSeq" id="NP_567626.1">
    <property type="nucleotide sequence ID" value="NM_118264.3"/>
</dbReference>
<dbReference type="SMR" id="Q9LDR8"/>
<dbReference type="IntAct" id="Q9LDR8">
    <property type="interactions" value="1"/>
</dbReference>
<dbReference type="STRING" id="3702.Q9LDR8"/>
<dbReference type="PaxDb" id="3702-AT4G21440.1"/>
<dbReference type="EnsemblPlants" id="AT4G21440.1">
    <property type="protein sequence ID" value="AT4G21440.1"/>
    <property type="gene ID" value="AT4G21440"/>
</dbReference>
<dbReference type="GeneID" id="826916"/>
<dbReference type="Gramene" id="AT4G21440.1">
    <property type="protein sequence ID" value="AT4G21440.1"/>
    <property type="gene ID" value="AT4G21440"/>
</dbReference>
<dbReference type="KEGG" id="ath:AT4G21440"/>
<dbReference type="Araport" id="AT4G21440"/>
<dbReference type="TAIR" id="AT4G21440">
    <property type="gene designation" value="MYB102"/>
</dbReference>
<dbReference type="eggNOG" id="KOG0048">
    <property type="taxonomic scope" value="Eukaryota"/>
</dbReference>
<dbReference type="HOGENOM" id="CLU_028567_15_2_1"/>
<dbReference type="InParanoid" id="Q9LDR8"/>
<dbReference type="OMA" id="MESYCNN"/>
<dbReference type="PhylomeDB" id="Q9LDR8"/>
<dbReference type="PRO" id="PR:Q9LDR8"/>
<dbReference type="Proteomes" id="UP000006548">
    <property type="component" value="Chromosome 4"/>
</dbReference>
<dbReference type="ExpressionAtlas" id="Q9LDR8">
    <property type="expression patterns" value="baseline and differential"/>
</dbReference>
<dbReference type="GO" id="GO:0005634">
    <property type="term" value="C:nucleus"/>
    <property type="evidence" value="ECO:0007669"/>
    <property type="project" value="UniProtKB-SubCell"/>
</dbReference>
<dbReference type="GO" id="GO:0003677">
    <property type="term" value="F:DNA binding"/>
    <property type="evidence" value="ECO:0007669"/>
    <property type="project" value="UniProtKB-KW"/>
</dbReference>
<dbReference type="GO" id="GO:0003700">
    <property type="term" value="F:DNA-binding transcription factor activity"/>
    <property type="evidence" value="ECO:0000250"/>
    <property type="project" value="TAIR"/>
</dbReference>
<dbReference type="GO" id="GO:0006952">
    <property type="term" value="P:defense response"/>
    <property type="evidence" value="ECO:0007669"/>
    <property type="project" value="UniProtKB-KW"/>
</dbReference>
<dbReference type="GO" id="GO:0006355">
    <property type="term" value="P:regulation of DNA-templated transcription"/>
    <property type="evidence" value="ECO:0000304"/>
    <property type="project" value="TAIR"/>
</dbReference>
<dbReference type="GO" id="GO:0006970">
    <property type="term" value="P:response to osmotic stress"/>
    <property type="evidence" value="ECO:0000270"/>
    <property type="project" value="TAIR"/>
</dbReference>
<dbReference type="GO" id="GO:0009611">
    <property type="term" value="P:response to wounding"/>
    <property type="evidence" value="ECO:0000270"/>
    <property type="project" value="TAIR"/>
</dbReference>
<dbReference type="CDD" id="cd00167">
    <property type="entry name" value="SANT"/>
    <property type="match status" value="2"/>
</dbReference>
<dbReference type="FunFam" id="1.10.10.60:FF:000001">
    <property type="entry name" value="MYB-related transcription factor"/>
    <property type="match status" value="1"/>
</dbReference>
<dbReference type="FunFam" id="1.10.10.60:FF:000349">
    <property type="entry name" value="Transcription factor MYB39"/>
    <property type="match status" value="1"/>
</dbReference>
<dbReference type="Gene3D" id="1.10.10.60">
    <property type="entry name" value="Homeodomain-like"/>
    <property type="match status" value="2"/>
</dbReference>
<dbReference type="InterPro" id="IPR009057">
    <property type="entry name" value="Homeodomain-like_sf"/>
</dbReference>
<dbReference type="InterPro" id="IPR017930">
    <property type="entry name" value="Myb_dom"/>
</dbReference>
<dbReference type="InterPro" id="IPR015495">
    <property type="entry name" value="Myb_TF_plants"/>
</dbReference>
<dbReference type="InterPro" id="IPR001005">
    <property type="entry name" value="SANT/Myb"/>
</dbReference>
<dbReference type="PANTHER" id="PTHR47994">
    <property type="entry name" value="F14D16.11-RELATED"/>
    <property type="match status" value="1"/>
</dbReference>
<dbReference type="PANTHER" id="PTHR47994:SF5">
    <property type="entry name" value="F14D16.11-RELATED"/>
    <property type="match status" value="1"/>
</dbReference>
<dbReference type="Pfam" id="PF00249">
    <property type="entry name" value="Myb_DNA-binding"/>
    <property type="match status" value="2"/>
</dbReference>
<dbReference type="SMART" id="SM00717">
    <property type="entry name" value="SANT"/>
    <property type="match status" value="2"/>
</dbReference>
<dbReference type="SUPFAM" id="SSF46689">
    <property type="entry name" value="Homeodomain-like"/>
    <property type="match status" value="1"/>
</dbReference>
<dbReference type="PROSITE" id="PS51294">
    <property type="entry name" value="HTH_MYB"/>
    <property type="match status" value="2"/>
</dbReference>
<accession>Q9LDR8</accession>
<accession>O65409</accession>
<accession>Q8LBF0</accession>
<accession>Q8W4E0</accession>
<proteinExistence type="evidence at transcript level"/>
<evidence type="ECO:0000255" key="1">
    <source>
        <dbReference type="PROSITE-ProRule" id="PRU00625"/>
    </source>
</evidence>
<evidence type="ECO:0000269" key="2">
    <source>
    </source>
</evidence>
<evidence type="ECO:0000269" key="3">
    <source>
    </source>
</evidence>
<evidence type="ECO:0000269" key="4">
    <source>
    </source>
</evidence>
<evidence type="ECO:0000303" key="5">
    <source>
    </source>
</evidence>
<evidence type="ECO:0000303" key="6">
    <source>
    </source>
</evidence>
<evidence type="ECO:0000305" key="7"/>
<evidence type="ECO:0000305" key="8">
    <source>
    </source>
</evidence>
<evidence type="ECO:0000312" key="9">
    <source>
        <dbReference type="Araport" id="AT4G21440"/>
    </source>
</evidence>
<evidence type="ECO:0000312" key="10">
    <source>
        <dbReference type="EMBL" id="CAA18708.1"/>
    </source>
</evidence>
<evidence type="ECO:0000312" key="11">
    <source>
        <dbReference type="EMBL" id="CAA20209.1"/>
    </source>
</evidence>